<evidence type="ECO:0000250" key="1"/>
<evidence type="ECO:0000255" key="2">
    <source>
        <dbReference type="PROSITE-ProRule" id="PRU00406"/>
    </source>
</evidence>
<evidence type="ECO:0000256" key="3">
    <source>
        <dbReference type="SAM" id="MobiDB-lite"/>
    </source>
</evidence>
<evidence type="ECO:0000305" key="4"/>
<protein>
    <recommendedName>
        <fullName>SCAR-like protein 1</fullName>
    </recommendedName>
</protein>
<gene>
    <name type="ordered locus">Os03g0816900</name>
    <name type="ordered locus">Os03g0817000</name>
    <name type="ordered locus">LOC_Os03g60240</name>
    <name type="ORF">OSJNBa0094J08.20</name>
</gene>
<accession>Q84TX2</accession>
<keyword id="KW-0009">Actin-binding</keyword>
<keyword id="KW-0963">Cytoplasm</keyword>
<keyword id="KW-0206">Cytoskeleton</keyword>
<keyword id="KW-1185">Reference proteome</keyword>
<comment type="function">
    <text evidence="1">Involved in regulation of actin and microtubule organization. Part of a WAVE complex that activates the Arp2/3 complex (By similarity).</text>
</comment>
<comment type="subcellular location">
    <subcellularLocation>
        <location evidence="1">Cytoplasm</location>
        <location evidence="1">Cytoskeleton</location>
    </subcellularLocation>
</comment>
<comment type="similarity">
    <text evidence="4">Belongs to the SCAR/WAVE family.</text>
</comment>
<comment type="sequence caution" evidence="4">
    <conflict type="erroneous gene model prediction">
        <sequence resource="EMBL-CDS" id="AAO60018"/>
    </conflict>
</comment>
<name>SCRL1_ORYSJ</name>
<reference key="1">
    <citation type="journal article" date="2005" name="Genome Res.">
        <title>Sequence, annotation, and analysis of synteny between rice chromosome 3 and diverged grass species.</title>
        <authorList>
            <consortium name="The rice chromosome 3 sequencing consortium"/>
            <person name="Buell C.R."/>
            <person name="Yuan Q."/>
            <person name="Ouyang S."/>
            <person name="Liu J."/>
            <person name="Zhu W."/>
            <person name="Wang A."/>
            <person name="Maiti R."/>
            <person name="Haas B."/>
            <person name="Wortman J."/>
            <person name="Pertea M."/>
            <person name="Jones K.M."/>
            <person name="Kim M."/>
            <person name="Overton L."/>
            <person name="Tsitrin T."/>
            <person name="Fadrosh D."/>
            <person name="Bera J."/>
            <person name="Weaver B."/>
            <person name="Jin S."/>
            <person name="Johri S."/>
            <person name="Reardon M."/>
            <person name="Webb K."/>
            <person name="Hill J."/>
            <person name="Moffat K."/>
            <person name="Tallon L."/>
            <person name="Van Aken S."/>
            <person name="Lewis M."/>
            <person name="Utterback T."/>
            <person name="Feldblyum T."/>
            <person name="Zismann V."/>
            <person name="Iobst S."/>
            <person name="Hsiao J."/>
            <person name="de Vazeille A.R."/>
            <person name="Salzberg S.L."/>
            <person name="White O."/>
            <person name="Fraser C.M."/>
            <person name="Yu Y."/>
            <person name="Kim H."/>
            <person name="Rambo T."/>
            <person name="Currie J."/>
            <person name="Collura K."/>
            <person name="Kernodle-Thompson S."/>
            <person name="Wei F."/>
            <person name="Kudrna K."/>
            <person name="Ammiraju J.S.S."/>
            <person name="Luo M."/>
            <person name="Goicoechea J.L."/>
            <person name="Wing R.A."/>
            <person name="Henry D."/>
            <person name="Oates R."/>
            <person name="Palmer M."/>
            <person name="Pries G."/>
            <person name="Saski C."/>
            <person name="Simmons J."/>
            <person name="Soderlund C."/>
            <person name="Nelson W."/>
            <person name="de la Bastide M."/>
            <person name="Spiegel L."/>
            <person name="Nascimento L."/>
            <person name="Huang E."/>
            <person name="Preston R."/>
            <person name="Zutavern T."/>
            <person name="Palmer L."/>
            <person name="O'Shaughnessy A."/>
            <person name="Dike S."/>
            <person name="McCombie W.R."/>
            <person name="Minx P."/>
            <person name="Cordum H."/>
            <person name="Wilson R."/>
            <person name="Jin W."/>
            <person name="Lee H.R."/>
            <person name="Jiang J."/>
            <person name="Jackson S."/>
        </authorList>
    </citation>
    <scope>NUCLEOTIDE SEQUENCE [LARGE SCALE GENOMIC DNA]</scope>
    <source>
        <strain>cv. Nipponbare</strain>
    </source>
</reference>
<reference key="2">
    <citation type="journal article" date="2005" name="Nature">
        <title>The map-based sequence of the rice genome.</title>
        <authorList>
            <consortium name="International rice genome sequencing project (IRGSP)"/>
        </authorList>
    </citation>
    <scope>NUCLEOTIDE SEQUENCE [LARGE SCALE GENOMIC DNA]</scope>
    <source>
        <strain>cv. Nipponbare</strain>
    </source>
</reference>
<reference key="3">
    <citation type="journal article" date="2013" name="Rice">
        <title>Improvement of the Oryza sativa Nipponbare reference genome using next generation sequence and optical map data.</title>
        <authorList>
            <person name="Kawahara Y."/>
            <person name="de la Bastide M."/>
            <person name="Hamilton J.P."/>
            <person name="Kanamori H."/>
            <person name="McCombie W.R."/>
            <person name="Ouyang S."/>
            <person name="Schwartz D.C."/>
            <person name="Tanaka T."/>
            <person name="Wu J."/>
            <person name="Zhou S."/>
            <person name="Childs K.L."/>
            <person name="Davidson R.M."/>
            <person name="Lin H."/>
            <person name="Quesada-Ocampo L."/>
            <person name="Vaillancourt B."/>
            <person name="Sakai H."/>
            <person name="Lee S.S."/>
            <person name="Kim J."/>
            <person name="Numa H."/>
            <person name="Itoh T."/>
            <person name="Buell C.R."/>
            <person name="Matsumoto T."/>
        </authorList>
    </citation>
    <scope>GENOME REANNOTATION</scope>
    <source>
        <strain>cv. Nipponbare</strain>
    </source>
</reference>
<reference key="4">
    <citation type="journal article" date="2003" name="Science">
        <title>Collection, mapping, and annotation of over 28,000 cDNA clones from japonica rice.</title>
        <authorList>
            <consortium name="The rice full-length cDNA consortium"/>
        </authorList>
    </citation>
    <scope>NUCLEOTIDE SEQUENCE [LARGE SCALE MRNA] OF 32-1186 AND 1665-2097</scope>
    <source>
        <strain>cv. Nipponbare</strain>
    </source>
</reference>
<organism>
    <name type="scientific">Oryza sativa subsp. japonica</name>
    <name type="common">Rice</name>
    <dbReference type="NCBI Taxonomy" id="39947"/>
    <lineage>
        <taxon>Eukaryota</taxon>
        <taxon>Viridiplantae</taxon>
        <taxon>Streptophyta</taxon>
        <taxon>Embryophyta</taxon>
        <taxon>Tracheophyta</taxon>
        <taxon>Spermatophyta</taxon>
        <taxon>Magnoliopsida</taxon>
        <taxon>Liliopsida</taxon>
        <taxon>Poales</taxon>
        <taxon>Poaceae</taxon>
        <taxon>BOP clade</taxon>
        <taxon>Oryzoideae</taxon>
        <taxon>Oryzeae</taxon>
        <taxon>Oryzinae</taxon>
        <taxon>Oryza</taxon>
        <taxon>Oryza sativa</taxon>
    </lineage>
</organism>
<sequence length="2097" mass="230573">MIRYQIRNEYGLSDPELYAPGEKDDPEALLEGVAMAGLVGVLRQLGDLAEFAAEIFHDLHEDVMATASRGHGLMLRLRQLEAEFPAVEKAIISQSDHSNYPHDDGVEWHTNLQIDQNMITQGDMPRFILDSYEECRGPPRLFTLDKFDVAGAGASLKRYSDPSFFKTEHSSDMIETDAVIEKKPRKIKKKALRWRKGETLESLLIANSESHTTSKDRSSRKVPPRTTKLKYRYPRESDHKNISRICREHLQEIISSQQKIFSNYSSRYYHPKFRLTESSETASSFGEIDNFSARAQSSAKLELTKVVPINEFDTKGIAPTHINGSDCLEALEADDRQLQATQHEPDKVEDVCKRSLVEQNAMLSNSDRMQSVQEENLLSAMVPADQNDDRCRPDDTGSDQENFVDALNNMESEGEAHAEMKIKKDPGAKMELDELNFHRDEGENERHTEFSELGHVIDSSPWLNDSYNGGEPNHAISSNTNFSGVDCTNDEEPSNDVDLMEMDVSSSSSVFSDDNDVFRTNGNMNGFQQYQEASLSNDHHAVIAHSSDKQSSQKSSGLDGSSIESNDFIEKPFHSLEDDKNFAPDGTSVILGRPNDVSQCEEEIEVGNADDSLLQPTISNQEVHRSNNQLEGVAMHASISSGKVASFPDMDPGMCTKDLELDNVLVPKETVANTPPTGLGTDHIHEHVDELDSGVAPINSSIQSDSTYESDDDDMAEDLNSLPEDDLYKHDVEDLYKHVLEDDGIIALGKGPCSTRANMHQEDPMEVSDVRGDFSNGQELPVLTETASPQGELVGGGELPLLTETASPQGGEEDLADEVVVISSRDLNDEKKPSLAEVPLACGDASLLDSSASCLEHDESTETGEIAKSDEVLVNVEVAEESITGRFTDDMTPFQEDLPDGAKYSEDAEFLANPRVDNSRHDVQLQSSSPCREELETVKAPCENLCALDESREHIFEKSVLQINNLPQHIETKNTGEACSDIDDIQHLSALHCPKNPVCQEELPDETNLSADVQYHCDVEKGGAVILNSKMVEEQPENIDLVREPRAQDSFGTNPFMDPGYKANHALADPCPSYQPCFSEEEQDFISELLIPHGNMGIEDLNPVPVADSLWEPATPPDEVPLPSEVMTEEDFRSFCHEYHEMDLTATPESIDDKPASDSNVVSSSLVTSESEFLYCVSAVRTGVDQEESRDAPDDTLMHFSAKADPDDKAANSDLKSDEPFIDEKIHELGVPSVPMELEVEQHALHEVDSHGDSQLLDNDMIDETCSSPSGNSIAVKDKQETCANLVSRAFINERTDELEVPVSNSVLLEPSEEVHDSDEYNYQDVPWSSTDEGRDEVDAHPLSKRIQTQGSEALVLGELDSRAVPSCSVNEMADHVDAPPLSTVLEAEQEPEDCISGEHNSQVTKSSLVDEKIGELDDASPLSNTLLAEMEREVCVPGKSASQIASCSPTPSNEKIDELNAPPLSSSGLIELESEDSVSGDLDSQIIPCSSPNDKTNEPDGATSTHVLPVELEQEVCSFPELDSLVAPCSLNDDKVCELDEPPCKQLESENGSYCLPQVDCQIEPCYSESVVLSEASTMSSANAMPSTEETYRLSSPVPPPNEPFSNVSYEDPQKPPPLPPLLWRLGKPRLGIASTKGHMLEPERGKGPVLHTSDAGMDNMPGCLSGMTESIEPVSSQEIKERHLDPILDNNERGVEFRRLATPPTANDVAVTEHVQLFSDACENIKHQERVSSSETEAEEHQNGTGITDVMDSHPPKPLFLVPSISQQGLQGSVFPSDTSDNGEHSSYTSRAVSEDEKTVDDHNAACAMDLHITSSSASSHVSENGCNQQSHGESLPVTSVDKVHTSDASCEDNKLKNHFITSEVCSDATNLSASGLLTEEENIHNVEDQYEGPLPSEESSGCLDYPHDDHNSEKEDIHQPDGYAASPGNNNHFDSSHEGGYLHAEQPPVMGWTVRPQMLHPNYGISMEENQFEPKVEDHLLIKKPVSIRNIPRNPLVDAVAAHDRSTMRKVSELVAPTDKSKPNERNLLLEQIRNKTFNLKPVSSAKQPTIRTPPRASTRNLKVAAIIEKANAIRQAVGSDDEDGDNWSESSDT</sequence>
<feature type="chain" id="PRO_0000189009" description="SCAR-like protein 1">
    <location>
        <begin position="1"/>
        <end position="2097"/>
    </location>
</feature>
<feature type="domain" description="WH2" evidence="2">
    <location>
        <begin position="2028"/>
        <end position="2046"/>
    </location>
</feature>
<feature type="region of interest" description="Disordered" evidence="3">
    <location>
        <begin position="205"/>
        <end position="227"/>
    </location>
</feature>
<feature type="region of interest" description="Disordered" evidence="3">
    <location>
        <begin position="544"/>
        <end position="565"/>
    </location>
</feature>
<feature type="region of interest" description="Disordered" evidence="3">
    <location>
        <begin position="1443"/>
        <end position="1467"/>
    </location>
</feature>
<feature type="region of interest" description="Disordered" evidence="3">
    <location>
        <begin position="1588"/>
        <end position="1616"/>
    </location>
</feature>
<feature type="region of interest" description="Disordered" evidence="3">
    <location>
        <begin position="1730"/>
        <end position="1802"/>
    </location>
</feature>
<feature type="region of interest" description="Disordered" evidence="3">
    <location>
        <begin position="1820"/>
        <end position="1842"/>
    </location>
</feature>
<feature type="region of interest" description="Disordered" evidence="3">
    <location>
        <begin position="1893"/>
        <end position="1944"/>
    </location>
</feature>
<feature type="compositionally biased region" description="Low complexity" evidence="3">
    <location>
        <begin position="549"/>
        <end position="562"/>
    </location>
</feature>
<feature type="compositionally biased region" description="Polar residues" evidence="3">
    <location>
        <begin position="1443"/>
        <end position="1454"/>
    </location>
</feature>
<feature type="compositionally biased region" description="Polar residues" evidence="3">
    <location>
        <begin position="1766"/>
        <end position="1794"/>
    </location>
</feature>
<feature type="compositionally biased region" description="Basic and acidic residues" evidence="3">
    <location>
        <begin position="1908"/>
        <end position="1922"/>
    </location>
</feature>
<feature type="sequence conflict" description="In Ref. 4; AK066412." evidence="4" ref="4">
    <original>D</original>
    <variation>Y</variation>
    <location>
        <position position="1084"/>
    </location>
</feature>
<feature type="sequence conflict" description="In Ref. 4; AK104998." evidence="4" ref="4">
    <original>A</original>
    <variation>V</variation>
    <location>
        <position position="2060"/>
    </location>
</feature>
<proteinExistence type="evidence at transcript level"/>
<dbReference type="EMBL" id="AC133007">
    <property type="protein sequence ID" value="AAO60018.1"/>
    <property type="status" value="ALT_SEQ"/>
    <property type="molecule type" value="Genomic_DNA"/>
</dbReference>
<dbReference type="EMBL" id="AP014959">
    <property type="status" value="NOT_ANNOTATED_CDS"/>
    <property type="molecule type" value="Genomic_DNA"/>
</dbReference>
<dbReference type="EMBL" id="AK066412">
    <property type="status" value="NOT_ANNOTATED_CDS"/>
    <property type="molecule type" value="mRNA"/>
</dbReference>
<dbReference type="EMBL" id="AK104998">
    <property type="status" value="NOT_ANNOTATED_CDS"/>
    <property type="molecule type" value="mRNA"/>
</dbReference>
<dbReference type="RefSeq" id="XP_015631167.1">
    <property type="nucleotide sequence ID" value="XM_015775681.1"/>
</dbReference>
<dbReference type="FunCoup" id="Q84TX2">
    <property type="interactions" value="2226"/>
</dbReference>
<dbReference type="STRING" id="39947.Q84TX2"/>
<dbReference type="PaxDb" id="39947-Q84TX2"/>
<dbReference type="eggNOG" id="ENOG502QTI6">
    <property type="taxonomic scope" value="Eukaryota"/>
</dbReference>
<dbReference type="InParanoid" id="Q84TX2"/>
<dbReference type="OrthoDB" id="1929108at2759"/>
<dbReference type="Proteomes" id="UP000000763">
    <property type="component" value="Chromosome 3"/>
</dbReference>
<dbReference type="Proteomes" id="UP000059680">
    <property type="component" value="Chromosome 3"/>
</dbReference>
<dbReference type="GO" id="GO:0005737">
    <property type="term" value="C:cytoplasm"/>
    <property type="evidence" value="ECO:0007669"/>
    <property type="project" value="UniProtKB-KW"/>
</dbReference>
<dbReference type="GO" id="GO:0005856">
    <property type="term" value="C:cytoskeleton"/>
    <property type="evidence" value="ECO:0007669"/>
    <property type="project" value="UniProtKB-SubCell"/>
</dbReference>
<dbReference type="GO" id="GO:0003779">
    <property type="term" value="F:actin binding"/>
    <property type="evidence" value="ECO:0007669"/>
    <property type="project" value="UniProtKB-KW"/>
</dbReference>
<dbReference type="GO" id="GO:0071933">
    <property type="term" value="F:Arp2/3 complex binding"/>
    <property type="evidence" value="ECO:0000318"/>
    <property type="project" value="GO_Central"/>
</dbReference>
<dbReference type="GO" id="GO:0034237">
    <property type="term" value="F:protein kinase A regulatory subunit binding"/>
    <property type="evidence" value="ECO:0000318"/>
    <property type="project" value="GO_Central"/>
</dbReference>
<dbReference type="GO" id="GO:0030036">
    <property type="term" value="P:actin cytoskeleton organization"/>
    <property type="evidence" value="ECO:0000318"/>
    <property type="project" value="GO_Central"/>
</dbReference>
<dbReference type="GO" id="GO:2000601">
    <property type="term" value="P:positive regulation of Arp2/3 complex-mediated actin nucleation"/>
    <property type="evidence" value="ECO:0000318"/>
    <property type="project" value="GO_Central"/>
</dbReference>
<dbReference type="Gene3D" id="1.20.5.340">
    <property type="match status" value="1"/>
</dbReference>
<dbReference type="Gene3D" id="6.10.280.150">
    <property type="match status" value="2"/>
</dbReference>
<dbReference type="InterPro" id="IPR028288">
    <property type="entry name" value="SCAR/WAVE_fam"/>
</dbReference>
<dbReference type="InterPro" id="IPR003124">
    <property type="entry name" value="WH2_dom"/>
</dbReference>
<dbReference type="PANTHER" id="PTHR12902">
    <property type="entry name" value="WASP-1"/>
    <property type="match status" value="1"/>
</dbReference>
<dbReference type="PANTHER" id="PTHR12902:SF1">
    <property type="entry name" value="WISKOTT-ALDRICH SYNDROME PROTEIN FAMILY MEMBER"/>
    <property type="match status" value="1"/>
</dbReference>
<dbReference type="PROSITE" id="PS51082">
    <property type="entry name" value="WH2"/>
    <property type="match status" value="1"/>
</dbReference>